<reference key="1">
    <citation type="journal article" date="2001" name="Nature">
        <title>Complete genome sequence of a multiple drug resistant Salmonella enterica serovar Typhi CT18.</title>
        <authorList>
            <person name="Parkhill J."/>
            <person name="Dougan G."/>
            <person name="James K.D."/>
            <person name="Thomson N.R."/>
            <person name="Pickard D."/>
            <person name="Wain J."/>
            <person name="Churcher C.M."/>
            <person name="Mungall K.L."/>
            <person name="Bentley S.D."/>
            <person name="Holden M.T.G."/>
            <person name="Sebaihia M."/>
            <person name="Baker S."/>
            <person name="Basham D."/>
            <person name="Brooks K."/>
            <person name="Chillingworth T."/>
            <person name="Connerton P."/>
            <person name="Cronin A."/>
            <person name="Davis P."/>
            <person name="Davies R.M."/>
            <person name="Dowd L."/>
            <person name="White N."/>
            <person name="Farrar J."/>
            <person name="Feltwell T."/>
            <person name="Hamlin N."/>
            <person name="Haque A."/>
            <person name="Hien T.T."/>
            <person name="Holroyd S."/>
            <person name="Jagels K."/>
            <person name="Krogh A."/>
            <person name="Larsen T.S."/>
            <person name="Leather S."/>
            <person name="Moule S."/>
            <person name="O'Gaora P."/>
            <person name="Parry C."/>
            <person name="Quail M.A."/>
            <person name="Rutherford K.M."/>
            <person name="Simmonds M."/>
            <person name="Skelton J."/>
            <person name="Stevens K."/>
            <person name="Whitehead S."/>
            <person name="Barrell B.G."/>
        </authorList>
    </citation>
    <scope>NUCLEOTIDE SEQUENCE [LARGE SCALE GENOMIC DNA]</scope>
    <source>
        <strain>CT18</strain>
    </source>
</reference>
<reference key="2">
    <citation type="journal article" date="2003" name="J. Bacteriol.">
        <title>Comparative genomics of Salmonella enterica serovar Typhi strains Ty2 and CT18.</title>
        <authorList>
            <person name="Deng W."/>
            <person name="Liou S.-R."/>
            <person name="Plunkett G. III"/>
            <person name="Mayhew G.F."/>
            <person name="Rose D.J."/>
            <person name="Burland V."/>
            <person name="Kodoyianni V."/>
            <person name="Schwartz D.C."/>
            <person name="Blattner F.R."/>
        </authorList>
    </citation>
    <scope>NUCLEOTIDE SEQUENCE [LARGE SCALE GENOMIC DNA]</scope>
    <source>
        <strain>ATCC 700931 / Ty2</strain>
    </source>
</reference>
<dbReference type="EMBL" id="AL513382">
    <property type="protein sequence ID" value="CAD09257.1"/>
    <property type="molecule type" value="Genomic_DNA"/>
</dbReference>
<dbReference type="EMBL" id="AE014613">
    <property type="protein sequence ID" value="AAO71643.1"/>
    <property type="molecule type" value="Genomic_DNA"/>
</dbReference>
<dbReference type="RefSeq" id="NP_458571.1">
    <property type="nucleotide sequence ID" value="NC_003198.1"/>
</dbReference>
<dbReference type="RefSeq" id="WP_000832531.1">
    <property type="nucleotide sequence ID" value="NZ_WSUR01000035.1"/>
</dbReference>
<dbReference type="SMR" id="Q8Z1R2"/>
<dbReference type="STRING" id="220341.gene:17588301"/>
<dbReference type="KEGG" id="stt:t4179"/>
<dbReference type="KEGG" id="sty:STY4471"/>
<dbReference type="PATRIC" id="fig|220341.7.peg.4573"/>
<dbReference type="eggNOG" id="COG4147">
    <property type="taxonomic scope" value="Bacteria"/>
</dbReference>
<dbReference type="HOGENOM" id="CLU_018808_8_3_6"/>
<dbReference type="OMA" id="EYLMADQ"/>
<dbReference type="OrthoDB" id="9764416at2"/>
<dbReference type="Proteomes" id="UP000000541">
    <property type="component" value="Chromosome"/>
</dbReference>
<dbReference type="Proteomes" id="UP000002670">
    <property type="component" value="Chromosome"/>
</dbReference>
<dbReference type="GO" id="GO:0005886">
    <property type="term" value="C:plasma membrane"/>
    <property type="evidence" value="ECO:0007669"/>
    <property type="project" value="UniProtKB-SubCell"/>
</dbReference>
<dbReference type="GO" id="GO:0015123">
    <property type="term" value="F:acetate transmembrane transporter activity"/>
    <property type="evidence" value="ECO:0007669"/>
    <property type="project" value="UniProtKB-UniRule"/>
</dbReference>
<dbReference type="GO" id="GO:0043879">
    <property type="term" value="F:glycolate transmembrane transporter activity"/>
    <property type="evidence" value="ECO:0007669"/>
    <property type="project" value="InterPro"/>
</dbReference>
<dbReference type="GO" id="GO:0015293">
    <property type="term" value="F:symporter activity"/>
    <property type="evidence" value="ECO:0007669"/>
    <property type="project" value="UniProtKB-KW"/>
</dbReference>
<dbReference type="GO" id="GO:0006847">
    <property type="term" value="P:plasma membrane acetate transport"/>
    <property type="evidence" value="ECO:0007669"/>
    <property type="project" value="TreeGrafter"/>
</dbReference>
<dbReference type="GO" id="GO:0006814">
    <property type="term" value="P:sodium ion transport"/>
    <property type="evidence" value="ECO:0007669"/>
    <property type="project" value="UniProtKB-KW"/>
</dbReference>
<dbReference type="CDD" id="cd11480">
    <property type="entry name" value="SLC5sbd_u4"/>
    <property type="match status" value="1"/>
</dbReference>
<dbReference type="FunFam" id="1.20.1730.10:FF:000001">
    <property type="entry name" value="Cation/acetate symporter ActP"/>
    <property type="match status" value="1"/>
</dbReference>
<dbReference type="Gene3D" id="1.20.1730.10">
    <property type="entry name" value="Sodium/glucose cotransporter"/>
    <property type="match status" value="1"/>
</dbReference>
<dbReference type="HAMAP" id="MF_01426">
    <property type="entry name" value="Acet_symport_ActP"/>
    <property type="match status" value="1"/>
</dbReference>
<dbReference type="InterPro" id="IPR014083">
    <property type="entry name" value="Cation/Ac_symporter_ActP"/>
</dbReference>
<dbReference type="InterPro" id="IPR038377">
    <property type="entry name" value="Na/Glc_symporter_sf"/>
</dbReference>
<dbReference type="InterPro" id="IPR001734">
    <property type="entry name" value="Na/solute_symporter"/>
</dbReference>
<dbReference type="InterPro" id="IPR018212">
    <property type="entry name" value="Na/solute_symporter_CS"/>
</dbReference>
<dbReference type="InterPro" id="IPR050277">
    <property type="entry name" value="Sodium:Solute_Symporter"/>
</dbReference>
<dbReference type="NCBIfam" id="NF006903">
    <property type="entry name" value="PRK09395.1"/>
    <property type="match status" value="1"/>
</dbReference>
<dbReference type="NCBIfam" id="NF009135">
    <property type="entry name" value="PRK12488.1"/>
    <property type="match status" value="1"/>
</dbReference>
<dbReference type="NCBIfam" id="TIGR00813">
    <property type="entry name" value="sss"/>
    <property type="match status" value="1"/>
</dbReference>
<dbReference type="NCBIfam" id="TIGR02711">
    <property type="entry name" value="symport_actP"/>
    <property type="match status" value="1"/>
</dbReference>
<dbReference type="PANTHER" id="PTHR48086:SF6">
    <property type="entry name" value="CATION_ACETATE SYMPORTER ACTP"/>
    <property type="match status" value="1"/>
</dbReference>
<dbReference type="PANTHER" id="PTHR48086">
    <property type="entry name" value="SODIUM/PROLINE SYMPORTER-RELATED"/>
    <property type="match status" value="1"/>
</dbReference>
<dbReference type="Pfam" id="PF00474">
    <property type="entry name" value="SSF"/>
    <property type="match status" value="1"/>
</dbReference>
<dbReference type="PROSITE" id="PS00456">
    <property type="entry name" value="NA_SOLUT_SYMP_1"/>
    <property type="match status" value="1"/>
</dbReference>
<dbReference type="PROSITE" id="PS00457">
    <property type="entry name" value="NA_SOLUT_SYMP_2"/>
    <property type="match status" value="1"/>
</dbReference>
<dbReference type="PROSITE" id="PS50283">
    <property type="entry name" value="NA_SOLUT_SYMP_3"/>
    <property type="match status" value="1"/>
</dbReference>
<comment type="function">
    <text evidence="1">Transports acetate.</text>
</comment>
<comment type="subcellular location">
    <subcellularLocation>
        <location evidence="1">Cell inner membrane</location>
        <topology evidence="1">Multi-pass membrane protein</topology>
    </subcellularLocation>
</comment>
<comment type="similarity">
    <text evidence="3">Belongs to the sodium:solute symporter (SSF) (TC 2.A.21) family.</text>
</comment>
<evidence type="ECO:0000250" key="1"/>
<evidence type="ECO:0000255" key="2"/>
<evidence type="ECO:0000305" key="3"/>
<protein>
    <recommendedName>
        <fullName>Cation/acetate symporter ActP</fullName>
    </recommendedName>
    <alternativeName>
        <fullName>Acetate permease</fullName>
    </alternativeName>
    <alternativeName>
        <fullName>Acetate transporter ActP</fullName>
    </alternativeName>
</protein>
<proteinExistence type="inferred from homology"/>
<keyword id="KW-0997">Cell inner membrane</keyword>
<keyword id="KW-1003">Cell membrane</keyword>
<keyword id="KW-0406">Ion transport</keyword>
<keyword id="KW-0472">Membrane</keyword>
<keyword id="KW-0915">Sodium</keyword>
<keyword id="KW-0739">Sodium transport</keyword>
<keyword id="KW-0769">Symport</keyword>
<keyword id="KW-0812">Transmembrane</keyword>
<keyword id="KW-1133">Transmembrane helix</keyword>
<keyword id="KW-0813">Transport</keyword>
<organism>
    <name type="scientific">Salmonella typhi</name>
    <dbReference type="NCBI Taxonomy" id="90370"/>
    <lineage>
        <taxon>Bacteria</taxon>
        <taxon>Pseudomonadati</taxon>
        <taxon>Pseudomonadota</taxon>
        <taxon>Gammaproteobacteria</taxon>
        <taxon>Enterobacterales</taxon>
        <taxon>Enterobacteriaceae</taxon>
        <taxon>Salmonella</taxon>
    </lineage>
</organism>
<feature type="chain" id="PRO_0000105413" description="Cation/acetate symporter ActP">
    <location>
        <begin position="1"/>
        <end position="549"/>
    </location>
</feature>
<feature type="topological domain" description="Periplasmic" evidence="2">
    <location>
        <begin position="1"/>
        <end position="32"/>
    </location>
</feature>
<feature type="transmembrane region" description="Helical" evidence="2">
    <location>
        <begin position="33"/>
        <end position="55"/>
    </location>
</feature>
<feature type="topological domain" description="Cytoplasmic" evidence="2">
    <location>
        <begin position="56"/>
        <end position="75"/>
    </location>
</feature>
<feature type="transmembrane region" description="Helical" evidence="2">
    <location>
        <begin position="76"/>
        <end position="98"/>
    </location>
</feature>
<feature type="topological domain" description="Periplasmic" evidence="2">
    <location>
        <begin position="99"/>
        <end position="102"/>
    </location>
</feature>
<feature type="transmembrane region" description="Helical" evidence="2">
    <location>
        <begin position="103"/>
        <end position="125"/>
    </location>
</feature>
<feature type="topological domain" description="Cytoplasmic" evidence="2">
    <location>
        <begin position="126"/>
        <end position="145"/>
    </location>
</feature>
<feature type="transmembrane region" description="Helical" evidence="2">
    <location>
        <begin position="146"/>
        <end position="168"/>
    </location>
</feature>
<feature type="topological domain" description="Periplasmic" evidence="2">
    <location>
        <begin position="169"/>
        <end position="182"/>
    </location>
</feature>
<feature type="transmembrane region" description="Helical" evidence="2">
    <location>
        <begin position="183"/>
        <end position="205"/>
    </location>
</feature>
<feature type="topological domain" description="Cytoplasmic" evidence="2">
    <location>
        <begin position="206"/>
        <end position="211"/>
    </location>
</feature>
<feature type="transmembrane region" description="Helical" evidence="2">
    <location>
        <begin position="212"/>
        <end position="234"/>
    </location>
</feature>
<feature type="topological domain" description="Periplasmic" evidence="2">
    <location>
        <begin position="235"/>
        <end position="260"/>
    </location>
</feature>
<feature type="transmembrane region" description="Helical" evidence="2">
    <location>
        <begin position="261"/>
        <end position="283"/>
    </location>
</feature>
<feature type="topological domain" description="Cytoplasmic" evidence="2">
    <location>
        <begin position="284"/>
        <end position="302"/>
    </location>
</feature>
<feature type="transmembrane region" description="Helical" evidence="2">
    <location>
        <begin position="303"/>
        <end position="325"/>
    </location>
</feature>
<feature type="topological domain" description="Periplasmic" evidence="2">
    <location>
        <begin position="326"/>
        <end position="361"/>
    </location>
</feature>
<feature type="transmembrane region" description="Helical" evidence="2">
    <location>
        <begin position="362"/>
        <end position="384"/>
    </location>
</feature>
<feature type="topological domain" description="Cytoplasmic" evidence="2">
    <location>
        <begin position="385"/>
        <end position="403"/>
    </location>
</feature>
<feature type="transmembrane region" description="Helical" evidence="2">
    <location>
        <begin position="404"/>
        <end position="423"/>
    </location>
</feature>
<feature type="topological domain" description="Periplasmic" evidence="2">
    <location>
        <begin position="424"/>
        <end position="427"/>
    </location>
</feature>
<feature type="transmembrane region" description="Helical" evidence="2">
    <location>
        <begin position="428"/>
        <end position="450"/>
    </location>
</feature>
<feature type="topological domain" description="Cytoplasmic" evidence="2">
    <location>
        <begin position="451"/>
        <end position="461"/>
    </location>
</feature>
<feature type="transmembrane region" description="Helical" evidence="2">
    <location>
        <begin position="462"/>
        <end position="484"/>
    </location>
</feature>
<feature type="topological domain" description="Periplasmic" evidence="2">
    <location>
        <begin position="485"/>
        <end position="493"/>
    </location>
</feature>
<feature type="transmembrane region" description="Helical" evidence="2">
    <location>
        <begin position="494"/>
        <end position="516"/>
    </location>
</feature>
<feature type="topological domain" description="Cytoplasmic" evidence="2">
    <location>
        <begin position="517"/>
        <end position="549"/>
    </location>
</feature>
<accession>Q8Z1R2</accession>
<accession>Q7C5S9</accession>
<name>ACTP_SALTI</name>
<sequence length="549" mass="59048">MKRVLTALAAALPFAAHAADAISGAVERQPTNWQAIIMFLIFVVFTLGITYWASKRVRSRSDYYTAGGNITGFQNGLAIAGDYMSAASFLGISALVFTSGYDGLIYSLGFLVGWPIILFLIAERLRNLGRYTFADVASYRLKQGPIRILSACGSLVVVALYLIAQMVGAGKLIELLFGLNYHIAVVLVGVLMMMYVLFGGMLATTWVQIIKAVLLLFGASFMAFMVMKHVGFSFNNLFTEAMAVHPKGTAIMSPGGLVQDPISALSLGLGLIFGTAGLPHILMRFFTVSDAREARKSVFYATGFMGYFYILTFIIGFGAIMLVGANPAYKDAAGALIGGNNMAAVHLANAVGGNLFLGFISAVAFATILAVVAGLTLAGASAVSHDLYANVFRKGATEREELKVSKITVLVLDVIAIILGVLFENQNIAFMVGLAFAIAASCNFPIILLSMYWSKLTTRGAMLGGWLGLLTAVVLMILGPTIWVQILGHEKAIFPYEYPALFSISVAFLGIWFFSATDNSAEGNREREQFRAQFIRSQTGFGVQQGRAH</sequence>
<gene>
    <name type="primary">actP</name>
    <name type="ordered locus">STY4471</name>
    <name type="ordered locus">t4179</name>
</gene>